<reference key="1">
    <citation type="journal article" date="2004" name="Nature">
        <title>Genome evolution in yeasts.</title>
        <authorList>
            <person name="Dujon B."/>
            <person name="Sherman D."/>
            <person name="Fischer G."/>
            <person name="Durrens P."/>
            <person name="Casaregola S."/>
            <person name="Lafontaine I."/>
            <person name="de Montigny J."/>
            <person name="Marck C."/>
            <person name="Neuveglise C."/>
            <person name="Talla E."/>
            <person name="Goffard N."/>
            <person name="Frangeul L."/>
            <person name="Aigle M."/>
            <person name="Anthouard V."/>
            <person name="Babour A."/>
            <person name="Barbe V."/>
            <person name="Barnay S."/>
            <person name="Blanchin S."/>
            <person name="Beckerich J.-M."/>
            <person name="Beyne E."/>
            <person name="Bleykasten C."/>
            <person name="Boisrame A."/>
            <person name="Boyer J."/>
            <person name="Cattolico L."/>
            <person name="Confanioleri F."/>
            <person name="de Daruvar A."/>
            <person name="Despons L."/>
            <person name="Fabre E."/>
            <person name="Fairhead C."/>
            <person name="Ferry-Dumazet H."/>
            <person name="Groppi A."/>
            <person name="Hantraye F."/>
            <person name="Hennequin C."/>
            <person name="Jauniaux N."/>
            <person name="Joyet P."/>
            <person name="Kachouri R."/>
            <person name="Kerrest A."/>
            <person name="Koszul R."/>
            <person name="Lemaire M."/>
            <person name="Lesur I."/>
            <person name="Ma L."/>
            <person name="Muller H."/>
            <person name="Nicaud J.-M."/>
            <person name="Nikolski M."/>
            <person name="Oztas S."/>
            <person name="Ozier-Kalogeropoulos O."/>
            <person name="Pellenz S."/>
            <person name="Potier S."/>
            <person name="Richard G.-F."/>
            <person name="Straub M.-L."/>
            <person name="Suleau A."/>
            <person name="Swennen D."/>
            <person name="Tekaia F."/>
            <person name="Wesolowski-Louvel M."/>
            <person name="Westhof E."/>
            <person name="Wirth B."/>
            <person name="Zeniou-Meyer M."/>
            <person name="Zivanovic Y."/>
            <person name="Bolotin-Fukuhara M."/>
            <person name="Thierry A."/>
            <person name="Bouchier C."/>
            <person name="Caudron B."/>
            <person name="Scarpelli C."/>
            <person name="Gaillardin C."/>
            <person name="Weissenbach J."/>
            <person name="Wincker P."/>
            <person name="Souciet J.-L."/>
        </authorList>
    </citation>
    <scope>NUCLEOTIDE SEQUENCE [LARGE SCALE GENOMIC DNA]</scope>
    <source>
        <strain>ATCC 8585 / CBS 2359 / DSM 70799 / NBRC 1267 / NRRL Y-1140 / WM37</strain>
    </source>
</reference>
<dbReference type="EMBL" id="CR382126">
    <property type="protein sequence ID" value="CAG98374.1"/>
    <property type="molecule type" value="Genomic_DNA"/>
</dbReference>
<dbReference type="RefSeq" id="XP_455666.1">
    <property type="nucleotide sequence ID" value="XM_455666.1"/>
</dbReference>
<dbReference type="SMR" id="Q6CK73"/>
<dbReference type="FunCoup" id="Q6CK73">
    <property type="interactions" value="156"/>
</dbReference>
<dbReference type="STRING" id="284590.Q6CK73"/>
<dbReference type="PaxDb" id="284590-Q6CK73"/>
<dbReference type="KEGG" id="kla:KLLA0_F13024g"/>
<dbReference type="eggNOG" id="ENOG502S9GT">
    <property type="taxonomic scope" value="Eukaryota"/>
</dbReference>
<dbReference type="HOGENOM" id="CLU_131611_2_0_1"/>
<dbReference type="InParanoid" id="Q6CK73"/>
<dbReference type="OMA" id="VNMKDEY"/>
<dbReference type="Proteomes" id="UP000000598">
    <property type="component" value="Chromosome F"/>
</dbReference>
<dbReference type="GO" id="GO:0005743">
    <property type="term" value="C:mitochondrial inner membrane"/>
    <property type="evidence" value="ECO:0007669"/>
    <property type="project" value="UniProtKB-SubCell"/>
</dbReference>
<dbReference type="GO" id="GO:0033617">
    <property type="term" value="P:mitochondrial cytochrome c oxidase assembly"/>
    <property type="evidence" value="ECO:0007669"/>
    <property type="project" value="TreeGrafter"/>
</dbReference>
<dbReference type="InterPro" id="IPR020164">
    <property type="entry name" value="Cyt_c_Oxase_assmbl_COX16"/>
</dbReference>
<dbReference type="PANTHER" id="PTHR17130:SF14">
    <property type="entry name" value="CYTOCHROME C OXIDASE ASSEMBLY PROTEIN COX16 HOMOLOG, MITOCHONDRIAL"/>
    <property type="match status" value="1"/>
</dbReference>
<dbReference type="PANTHER" id="PTHR17130">
    <property type="entry name" value="MITOCHONDRIAL OUTER MEMBRANE PROTEIN 25"/>
    <property type="match status" value="1"/>
</dbReference>
<dbReference type="Pfam" id="PF14138">
    <property type="entry name" value="COX16"/>
    <property type="match status" value="1"/>
</dbReference>
<keyword id="KW-0472">Membrane</keyword>
<keyword id="KW-0496">Mitochondrion</keyword>
<keyword id="KW-0999">Mitochondrion inner membrane</keyword>
<keyword id="KW-1185">Reference proteome</keyword>
<keyword id="KW-0809">Transit peptide</keyword>
<keyword id="KW-0812">Transmembrane</keyword>
<keyword id="KW-1133">Transmembrane helix</keyword>
<accession>Q6CK73</accession>
<proteinExistence type="inferred from homology"/>
<sequence length="118" mass="14180">MSFGGKKFRSKRQQLAYEASLAGRYQKHMNKNPFLWFGLPFCSVIVLGSFWLSEFTAVRYQQKDQKVQEMKEDDLVKMKANQRQFDIKEEYYRLQGLGEQDWEPKRIPRFKGESENVW</sequence>
<name>COX16_KLULA</name>
<feature type="transit peptide" description="Mitochondrion" evidence="2">
    <location>
        <begin position="1"/>
        <end status="unknown"/>
    </location>
</feature>
<feature type="chain" id="PRO_0000280649" description="Cytochrome c oxidase assembly protein COX16, mitochondrial">
    <location>
        <begin status="unknown"/>
        <end position="118"/>
    </location>
</feature>
<feature type="transmembrane region" description="Helical" evidence="2">
    <location>
        <begin position="33"/>
        <end position="53"/>
    </location>
</feature>
<protein>
    <recommendedName>
        <fullName>Cytochrome c oxidase assembly protein COX16, mitochondrial</fullName>
    </recommendedName>
</protein>
<organism>
    <name type="scientific">Kluyveromyces lactis (strain ATCC 8585 / CBS 2359 / DSM 70799 / NBRC 1267 / NRRL Y-1140 / WM37)</name>
    <name type="common">Yeast</name>
    <name type="synonym">Candida sphaerica</name>
    <dbReference type="NCBI Taxonomy" id="284590"/>
    <lineage>
        <taxon>Eukaryota</taxon>
        <taxon>Fungi</taxon>
        <taxon>Dikarya</taxon>
        <taxon>Ascomycota</taxon>
        <taxon>Saccharomycotina</taxon>
        <taxon>Saccharomycetes</taxon>
        <taxon>Saccharomycetales</taxon>
        <taxon>Saccharomycetaceae</taxon>
        <taxon>Kluyveromyces</taxon>
    </lineage>
</organism>
<evidence type="ECO:0000250" key="1">
    <source>
        <dbReference type="UniProtKB" id="P47081"/>
    </source>
</evidence>
<evidence type="ECO:0000255" key="2"/>
<evidence type="ECO:0000305" key="3"/>
<gene>
    <name type="primary">COX16</name>
    <name type="ordered locus">KLLA0F13024g</name>
</gene>
<comment type="function">
    <text evidence="1">Required for the assembly of the mitochondrial respiratory chain complex IV (CIV), also known as cytochrome c oxidase. May participate in merging the COX1 and COX2 assembly lines.</text>
</comment>
<comment type="subcellular location">
    <subcellularLocation>
        <location evidence="1">Mitochondrion inner membrane</location>
        <topology evidence="1">Single-pass membrane protein</topology>
    </subcellularLocation>
</comment>
<comment type="similarity">
    <text evidence="3">Belongs to the COX16 family.</text>
</comment>